<organism>
    <name type="scientific">Pyricularia grisea</name>
    <name type="common">Crabgrass-specific blast fungus</name>
    <name type="synonym">Magnaporthe grisea</name>
    <dbReference type="NCBI Taxonomy" id="148305"/>
    <lineage>
        <taxon>Eukaryota</taxon>
        <taxon>Fungi</taxon>
        <taxon>Dikarya</taxon>
        <taxon>Ascomycota</taxon>
        <taxon>Pezizomycotina</taxon>
        <taxon>Sordariomycetes</taxon>
        <taxon>Sordariomycetidae</taxon>
        <taxon>Magnaporthales</taxon>
        <taxon>Pyriculariaceae</taxon>
        <taxon>Pyricularia</taxon>
    </lineage>
</organism>
<reference key="1">
    <citation type="journal article" date="2006" name="Appl. Environ. Microbiol.">
        <title>Identification of an endo-beta-1,4-D-xylanase from Magnaporthe grisea by gene knockout analysis, purification, and heterologous expression.</title>
        <authorList>
            <person name="Wu S.C."/>
            <person name="Halley J.E."/>
            <person name="Luttig C."/>
            <person name="Fernekes L.M."/>
            <person name="Gutierrez-Sanchez G."/>
            <person name="Darvill A.G."/>
            <person name="Albersheim P."/>
        </authorList>
    </citation>
    <scope>NUCLEOTIDE SEQUENCE [GENOMIC DNA]</scope>
    <scope>PROTEIN SEQUENCE OF 22-33</scope>
    <scope>SUBCELLULAR LOCATION</scope>
    <scope>FUNCTION</scope>
    <scope>CATALYTIC ACTIVITY</scope>
    <scope>INDUCTION</scope>
    <source>
        <strain>CP987</strain>
    </source>
</reference>
<accession>Q8NJ73</accession>
<name>XYN6_PYRGI</name>
<proteinExistence type="evidence at protein level"/>
<evidence type="ECO:0000250" key="1"/>
<evidence type="ECO:0000255" key="2">
    <source>
        <dbReference type="PROSITE-ProRule" id="PRU00597"/>
    </source>
</evidence>
<evidence type="ECO:0000255" key="3">
    <source>
        <dbReference type="PROSITE-ProRule" id="PRU01096"/>
    </source>
</evidence>
<evidence type="ECO:0000256" key="4">
    <source>
        <dbReference type="SAM" id="MobiDB-lite"/>
    </source>
</evidence>
<evidence type="ECO:0000269" key="5">
    <source>
    </source>
</evidence>
<evidence type="ECO:0000305" key="6"/>
<comment type="function">
    <text evidence="5">Endo-1,4-beta-xylanase involved in the hydrolysis of xylan, a major structural heterogeneous polysaccharide found in plant biomass representing the second most abundant polysaccharide in the biosphere, after cellulose.</text>
</comment>
<comment type="catalytic activity">
    <reaction evidence="5">
        <text>Endohydrolysis of (1-&gt;4)-beta-D-xylosidic linkages in xylans.</text>
        <dbReference type="EC" id="3.2.1.8"/>
    </reaction>
</comment>
<comment type="pathway">
    <text>Glycan degradation; xylan degradation.</text>
</comment>
<comment type="subcellular location">
    <subcellularLocation>
        <location evidence="5">Secreted</location>
    </subcellularLocation>
</comment>
<comment type="induction">
    <text evidence="5">Highly expressed both in culture with rice cell walls (RCWs) as a carbon source and in infected rice leaves.</text>
</comment>
<comment type="similarity">
    <text evidence="6">Belongs to the glycosyl hydrolase 10 (cellulase F) family.</text>
</comment>
<gene>
    <name type="primary">XYL6</name>
</gene>
<keyword id="KW-0119">Carbohydrate metabolism</keyword>
<keyword id="KW-0903">Direct protein sequencing</keyword>
<keyword id="KW-1015">Disulfide bond</keyword>
<keyword id="KW-0326">Glycosidase</keyword>
<keyword id="KW-0378">Hydrolase</keyword>
<keyword id="KW-0624">Polysaccharide degradation</keyword>
<keyword id="KW-1185">Reference proteome</keyword>
<keyword id="KW-0964">Secreted</keyword>
<keyword id="KW-0732">Signal</keyword>
<keyword id="KW-0858">Xylan degradation</keyword>
<sequence length="380" mass="40868">MRTPAIVLALAPAAAFGQAALWGQCGGQGWTGAKTCVSGAVCQAQNEWYSQCVPGSGGGNPPTPQPTQPSNPPPSTGSGLNAKFKNKGKLYFGTSMDHYDLNKAQLTNIVKAQFGQITNENSMKWDAIEPSRNSFSWTNADAVVNFATANGKLMRGHTLLWHSQLPAWVSNINDRNTLTQVIQNHVTAMVTRYRGKILQWDVVNEIFAEDGSLRSSVFSRVLGEDFVGIAFRAARAADPNAKLYINDYNLDIANYAKVTRGMVEKVNKWVSQGIPIDGIGSQAHLAQPGGWNPASGVPAALRALAAANVKEIAITELDIAGASANDYVTVVNACLQISKCVGITVWGVSDAISWRPNDNPLLYDRNYQPKAAYTAIMNAL</sequence>
<protein>
    <recommendedName>
        <fullName>Endo-1,4-beta-xylanase 6</fullName>
        <shortName>Xylanase 6</shortName>
        <ecNumber>3.2.1.8</ecNumber>
    </recommendedName>
    <alternativeName>
        <fullName>1,4-beta-D-xylan xylanohydrolase 6</fullName>
    </alternativeName>
</protein>
<feature type="signal peptide" evidence="5">
    <location>
        <begin position="1"/>
        <end position="21"/>
    </location>
</feature>
<feature type="chain" id="PRO_0000429630" description="Endo-1,4-beta-xylanase 6">
    <location>
        <begin position="22"/>
        <end position="380"/>
    </location>
</feature>
<feature type="domain" description="CBM1" evidence="2">
    <location>
        <begin position="22"/>
        <end position="53"/>
    </location>
</feature>
<feature type="domain" description="GH10" evidence="3">
    <location>
        <begin position="74"/>
        <end position="379"/>
    </location>
</feature>
<feature type="region of interest" description="Disordered" evidence="4">
    <location>
        <begin position="53"/>
        <end position="80"/>
    </location>
</feature>
<feature type="compositionally biased region" description="Pro residues" evidence="4">
    <location>
        <begin position="61"/>
        <end position="75"/>
    </location>
</feature>
<feature type="active site" description="Proton donor" evidence="1">
    <location>
        <position position="205"/>
    </location>
</feature>
<feature type="active site" description="Nucleophile" evidence="1">
    <location>
        <position position="316"/>
    </location>
</feature>
<feature type="disulfide bond" evidence="1">
    <location>
        <begin position="334"/>
        <end position="340"/>
    </location>
</feature>
<dbReference type="EC" id="3.2.1.8"/>
<dbReference type="EMBL" id="AY124591">
    <property type="protein sequence ID" value="AAM95237.1"/>
    <property type="molecule type" value="Genomic_DNA"/>
</dbReference>
<dbReference type="SMR" id="Q8NJ73"/>
<dbReference type="OMA" id="PENQMKW"/>
<dbReference type="BRENDA" id="3.2.1.8">
    <property type="organism ID" value="3152"/>
</dbReference>
<dbReference type="UniPathway" id="UPA00114"/>
<dbReference type="PHI-base" id="PHI:2043"/>
<dbReference type="Proteomes" id="UP000515153">
    <property type="component" value="Unplaced"/>
</dbReference>
<dbReference type="GO" id="GO:0005576">
    <property type="term" value="C:extracellular region"/>
    <property type="evidence" value="ECO:0007669"/>
    <property type="project" value="UniProtKB-SubCell"/>
</dbReference>
<dbReference type="GO" id="GO:0030248">
    <property type="term" value="F:cellulose binding"/>
    <property type="evidence" value="ECO:0007669"/>
    <property type="project" value="InterPro"/>
</dbReference>
<dbReference type="GO" id="GO:0031176">
    <property type="term" value="F:endo-1,4-beta-xylanase activity"/>
    <property type="evidence" value="ECO:0007669"/>
    <property type="project" value="UniProtKB-EC"/>
</dbReference>
<dbReference type="GO" id="GO:0045493">
    <property type="term" value="P:xylan catabolic process"/>
    <property type="evidence" value="ECO:0007669"/>
    <property type="project" value="UniProtKB-UniPathway"/>
</dbReference>
<dbReference type="Gene3D" id="3.20.20.80">
    <property type="entry name" value="Glycosidases"/>
    <property type="match status" value="1"/>
</dbReference>
<dbReference type="InterPro" id="IPR035971">
    <property type="entry name" value="CBD_sf"/>
</dbReference>
<dbReference type="InterPro" id="IPR000254">
    <property type="entry name" value="Cellulose-bd_dom_fun"/>
</dbReference>
<dbReference type="InterPro" id="IPR044846">
    <property type="entry name" value="GH10"/>
</dbReference>
<dbReference type="InterPro" id="IPR001000">
    <property type="entry name" value="GH10_dom"/>
</dbReference>
<dbReference type="InterPro" id="IPR017853">
    <property type="entry name" value="Glycoside_hydrolase_SF"/>
</dbReference>
<dbReference type="PANTHER" id="PTHR31490:SF76">
    <property type="entry name" value="ENDO-1,4-BETA-XYLANASE C"/>
    <property type="match status" value="1"/>
</dbReference>
<dbReference type="PANTHER" id="PTHR31490">
    <property type="entry name" value="GLYCOSYL HYDROLASE"/>
    <property type="match status" value="1"/>
</dbReference>
<dbReference type="Pfam" id="PF00734">
    <property type="entry name" value="CBM_1"/>
    <property type="match status" value="1"/>
</dbReference>
<dbReference type="Pfam" id="PF00331">
    <property type="entry name" value="Glyco_hydro_10"/>
    <property type="match status" value="1"/>
</dbReference>
<dbReference type="PRINTS" id="PR00134">
    <property type="entry name" value="GLHYDRLASE10"/>
</dbReference>
<dbReference type="SMART" id="SM00236">
    <property type="entry name" value="fCBD"/>
    <property type="match status" value="1"/>
</dbReference>
<dbReference type="SMART" id="SM00633">
    <property type="entry name" value="Glyco_10"/>
    <property type="match status" value="1"/>
</dbReference>
<dbReference type="SUPFAM" id="SSF51445">
    <property type="entry name" value="(Trans)glycosidases"/>
    <property type="match status" value="1"/>
</dbReference>
<dbReference type="SUPFAM" id="SSF57180">
    <property type="entry name" value="Cellulose-binding domain"/>
    <property type="match status" value="1"/>
</dbReference>
<dbReference type="PROSITE" id="PS00562">
    <property type="entry name" value="CBM1_1"/>
    <property type="match status" value="1"/>
</dbReference>
<dbReference type="PROSITE" id="PS51164">
    <property type="entry name" value="CBM1_2"/>
    <property type="match status" value="1"/>
</dbReference>
<dbReference type="PROSITE" id="PS51760">
    <property type="entry name" value="GH10_2"/>
    <property type="match status" value="1"/>
</dbReference>